<comment type="function">
    <text>Degrades alginates that contain guluronic acid.</text>
</comment>
<comment type="catalytic activity">
    <reaction>
        <text>Eliminative cleavage of alginate to give oligosaccharides with 4-deoxy-alpha-L-erythro-hex-4-enuronosyl groups at their non-reducing ends and beta-D-mannuronate at their reducing end.</text>
        <dbReference type="EC" id="4.2.2.3"/>
    </reaction>
</comment>
<comment type="subcellular location">
    <subcellularLocation>
        <location>Secreted</location>
    </subcellularLocation>
</comment>
<comment type="similarity">
    <text evidence="2">Belongs to the polysaccharide lyase 7 family.</text>
</comment>
<gene>
    <name type="primary">alyA</name>
</gene>
<reference key="1">
    <citation type="journal article" date="1994" name="Gene">
        <title>Alginate lyase from Klebsiella pneumoniae, subsp. aerogenes: gene cloning, sequence analysis and high-level production in Escherichia coli.</title>
        <authorList>
            <person name="Baron A.J."/>
            <person name="Wong T.Y."/>
            <person name="Hicks S.J."/>
            <person name="Gacesa P."/>
            <person name="Willcock D."/>
            <person name="McPherson M.J."/>
        </authorList>
    </citation>
    <scope>NUCLEOTIDE SEQUENCE [GENOMIC DNA]</scope>
    <scope>PROTEIN SEQUENCE OF 21-51</scope>
    <source>
        <strain>Subsp. aerogenes 25</strain>
    </source>
</reference>
<dbReference type="EC" id="4.2.2.3"/>
<dbReference type="EMBL" id="L19657">
    <property type="protein sequence ID" value="AAA25049.1"/>
    <property type="molecule type" value="Genomic_DNA"/>
</dbReference>
<dbReference type="PDB" id="4OZX">
    <property type="method" value="X-ray"/>
    <property type="resolution" value="1.88 A"/>
    <property type="chains" value="A=23-307"/>
</dbReference>
<dbReference type="PDBsum" id="4OZX"/>
<dbReference type="SMR" id="Q59478"/>
<dbReference type="CAZy" id="PL7">
    <property type="family name" value="Polysaccharide Lyase Family 7"/>
</dbReference>
<dbReference type="BRENDA" id="4.2.2.3">
    <property type="organism ID" value="2814"/>
</dbReference>
<dbReference type="EvolutionaryTrace" id="Q59478"/>
<dbReference type="GO" id="GO:0005576">
    <property type="term" value="C:extracellular region"/>
    <property type="evidence" value="ECO:0007669"/>
    <property type="project" value="UniProtKB-SubCell"/>
</dbReference>
<dbReference type="GO" id="GO:0045135">
    <property type="term" value="F:poly(beta-D-mannuronate) lyase activity"/>
    <property type="evidence" value="ECO:0007669"/>
    <property type="project" value="UniProtKB-EC"/>
</dbReference>
<dbReference type="Gene3D" id="2.60.120.200">
    <property type="match status" value="1"/>
</dbReference>
<dbReference type="InterPro" id="IPR014895">
    <property type="entry name" value="Alginate_lyase_2"/>
</dbReference>
<dbReference type="InterPro" id="IPR013320">
    <property type="entry name" value="ConA-like_dom_sf"/>
</dbReference>
<dbReference type="Pfam" id="PF08787">
    <property type="entry name" value="Alginate_lyase2"/>
    <property type="match status" value="1"/>
</dbReference>
<dbReference type="SUPFAM" id="SSF49899">
    <property type="entry name" value="Concanavalin A-like lectins/glucanases"/>
    <property type="match status" value="1"/>
</dbReference>
<keyword id="KW-0002">3D-structure</keyword>
<keyword id="KW-0903">Direct protein sequencing</keyword>
<keyword id="KW-0456">Lyase</keyword>
<keyword id="KW-0964">Secreted</keyword>
<keyword id="KW-0732">Signal</keyword>
<sequence length="307" mass="33512">MLKSGVMVASLCLFSVPSRAAVPAPGDKFELSGWSLSVPVDSDNDGKADQIKEKTLAAGYRNSDFFTLSDAGGMVFKAPISGAKTSKNTTYTRSELREMLRKGDTSIATQGVSRNNWVLSSAPLSEQKKAGGVDGTLEATLSVDHVTTTGVNWQVGRVIIGQIHANNDEPIRLYYRKLPHHQKGSVYFAHEPRKGFGDEQWYEMIGTLQPSHGNQTAAPTEPEAGIALGETFSYRIDATGNKLTVTLMREGRPDVVKTVDMSKSGYSEAGQYLYFKAGVYNQNKTGKPDDYVQATFYRLKATHGAQR</sequence>
<accession>Q59478</accession>
<name>ALYA_KLEPN</name>
<feature type="signal peptide" evidence="1">
    <location>
        <begin position="1"/>
        <end position="20"/>
    </location>
</feature>
<feature type="chain" id="PRO_0000024925" description="Alginate lyase">
    <location>
        <begin position="21"/>
        <end position="307"/>
    </location>
</feature>
<feature type="helix" evidence="3">
    <location>
        <begin position="25"/>
        <end position="28"/>
    </location>
</feature>
<feature type="strand" evidence="3">
    <location>
        <begin position="34"/>
        <end position="39"/>
    </location>
</feature>
<feature type="strand" evidence="3">
    <location>
        <begin position="44"/>
        <end position="47"/>
    </location>
</feature>
<feature type="strand" evidence="3">
    <location>
        <begin position="49"/>
        <end position="51"/>
    </location>
</feature>
<feature type="helix" evidence="3">
    <location>
        <begin position="53"/>
        <end position="57"/>
    </location>
</feature>
<feature type="turn" evidence="3">
    <location>
        <begin position="63"/>
        <end position="65"/>
    </location>
</feature>
<feature type="strand" evidence="3">
    <location>
        <begin position="66"/>
        <end position="68"/>
    </location>
</feature>
<feature type="strand" evidence="3">
    <location>
        <begin position="74"/>
        <end position="82"/>
    </location>
</feature>
<feature type="strand" evidence="3">
    <location>
        <begin position="93"/>
        <end position="98"/>
    </location>
</feature>
<feature type="turn" evidence="3">
    <location>
        <begin position="100"/>
        <end position="103"/>
    </location>
</feature>
<feature type="strand" evidence="3">
    <location>
        <begin position="109"/>
        <end position="113"/>
    </location>
</feature>
<feature type="strand" evidence="3">
    <location>
        <begin position="116"/>
        <end position="118"/>
    </location>
</feature>
<feature type="helix" evidence="3">
    <location>
        <begin position="124"/>
        <end position="129"/>
    </location>
</feature>
<feature type="strand" evidence="3">
    <location>
        <begin position="130"/>
        <end position="145"/>
    </location>
</feature>
<feature type="turn" evidence="3">
    <location>
        <begin position="152"/>
        <end position="156"/>
    </location>
</feature>
<feature type="strand" evidence="3">
    <location>
        <begin position="157"/>
        <end position="164"/>
    </location>
</feature>
<feature type="strand" evidence="3">
    <location>
        <begin position="166"/>
        <end position="168"/>
    </location>
</feature>
<feature type="strand" evidence="3">
    <location>
        <begin position="170"/>
        <end position="176"/>
    </location>
</feature>
<feature type="strand" evidence="3">
    <location>
        <begin position="182"/>
        <end position="190"/>
    </location>
</feature>
<feature type="strand" evidence="3">
    <location>
        <begin position="200"/>
        <end position="206"/>
    </location>
</feature>
<feature type="strand" evidence="3">
    <location>
        <begin position="232"/>
        <end position="239"/>
    </location>
</feature>
<feature type="strand" evidence="3">
    <location>
        <begin position="242"/>
        <end position="248"/>
    </location>
</feature>
<feature type="strand" evidence="3">
    <location>
        <begin position="255"/>
        <end position="260"/>
    </location>
</feature>
<feature type="strand" evidence="3">
    <location>
        <begin position="273"/>
        <end position="281"/>
    </location>
</feature>
<feature type="strand" evidence="3">
    <location>
        <begin position="284"/>
        <end position="286"/>
    </location>
</feature>
<feature type="strand" evidence="3">
    <location>
        <begin position="291"/>
        <end position="302"/>
    </location>
</feature>
<organism>
    <name type="scientific">Klebsiella pneumoniae</name>
    <dbReference type="NCBI Taxonomy" id="573"/>
    <lineage>
        <taxon>Bacteria</taxon>
        <taxon>Pseudomonadati</taxon>
        <taxon>Pseudomonadota</taxon>
        <taxon>Gammaproteobacteria</taxon>
        <taxon>Enterobacterales</taxon>
        <taxon>Enterobacteriaceae</taxon>
        <taxon>Klebsiella/Raoultella group</taxon>
        <taxon>Klebsiella</taxon>
        <taxon>Klebsiella pneumoniae complex</taxon>
    </lineage>
</organism>
<evidence type="ECO:0000269" key="1">
    <source>
    </source>
</evidence>
<evidence type="ECO:0000305" key="2"/>
<evidence type="ECO:0007829" key="3">
    <source>
        <dbReference type="PDB" id="4OZX"/>
    </source>
</evidence>
<proteinExistence type="evidence at protein level"/>
<protein>
    <recommendedName>
        <fullName>Alginate lyase</fullName>
        <ecNumber>4.2.2.3</ecNumber>
    </recommendedName>
    <alternativeName>
        <fullName>Poly(beta-D-mannuronate) lyase</fullName>
    </alternativeName>
    <alternativeName>
        <fullName>Poly(mana) alginate lyase</fullName>
    </alternativeName>
</protein>